<accession>A7FMW3</accession>
<comment type="function">
    <text evidence="1">Binds as a heterodimer with protein bS6 to the central domain of the 16S rRNA, where it helps stabilize the platform of the 30S subunit.</text>
</comment>
<comment type="subunit">
    <text evidence="1">Part of the 30S ribosomal subunit. Forms a tight heterodimer with protein bS6.</text>
</comment>
<comment type="similarity">
    <text evidence="1">Belongs to the bacterial ribosomal protein bS18 family.</text>
</comment>
<evidence type="ECO:0000255" key="1">
    <source>
        <dbReference type="HAMAP-Rule" id="MF_00270"/>
    </source>
</evidence>
<evidence type="ECO:0000305" key="2"/>
<dbReference type="EMBL" id="CP000720">
    <property type="protein sequence ID" value="ABS48266.1"/>
    <property type="molecule type" value="Genomic_DNA"/>
</dbReference>
<dbReference type="RefSeq" id="WP_002210155.1">
    <property type="nucleotide sequence ID" value="NC_009708.1"/>
</dbReference>
<dbReference type="SMR" id="A7FMW3"/>
<dbReference type="GeneID" id="98391335"/>
<dbReference type="KEGG" id="ypi:YpsIP31758_3637"/>
<dbReference type="HOGENOM" id="CLU_148710_2_2_6"/>
<dbReference type="Proteomes" id="UP000002412">
    <property type="component" value="Chromosome"/>
</dbReference>
<dbReference type="GO" id="GO:0022627">
    <property type="term" value="C:cytosolic small ribosomal subunit"/>
    <property type="evidence" value="ECO:0007669"/>
    <property type="project" value="TreeGrafter"/>
</dbReference>
<dbReference type="GO" id="GO:0070181">
    <property type="term" value="F:small ribosomal subunit rRNA binding"/>
    <property type="evidence" value="ECO:0007669"/>
    <property type="project" value="TreeGrafter"/>
</dbReference>
<dbReference type="GO" id="GO:0003735">
    <property type="term" value="F:structural constituent of ribosome"/>
    <property type="evidence" value="ECO:0007669"/>
    <property type="project" value="InterPro"/>
</dbReference>
<dbReference type="GO" id="GO:0006412">
    <property type="term" value="P:translation"/>
    <property type="evidence" value="ECO:0007669"/>
    <property type="project" value="UniProtKB-UniRule"/>
</dbReference>
<dbReference type="FunFam" id="4.10.640.10:FF:000001">
    <property type="entry name" value="30S ribosomal protein S18"/>
    <property type="match status" value="1"/>
</dbReference>
<dbReference type="Gene3D" id="4.10.640.10">
    <property type="entry name" value="Ribosomal protein S18"/>
    <property type="match status" value="1"/>
</dbReference>
<dbReference type="HAMAP" id="MF_00270">
    <property type="entry name" value="Ribosomal_bS18"/>
    <property type="match status" value="1"/>
</dbReference>
<dbReference type="InterPro" id="IPR001648">
    <property type="entry name" value="Ribosomal_bS18"/>
</dbReference>
<dbReference type="InterPro" id="IPR018275">
    <property type="entry name" value="Ribosomal_bS18_CS"/>
</dbReference>
<dbReference type="InterPro" id="IPR036870">
    <property type="entry name" value="Ribosomal_bS18_sf"/>
</dbReference>
<dbReference type="NCBIfam" id="TIGR00165">
    <property type="entry name" value="S18"/>
    <property type="match status" value="1"/>
</dbReference>
<dbReference type="PANTHER" id="PTHR13479">
    <property type="entry name" value="30S RIBOSOMAL PROTEIN S18"/>
    <property type="match status" value="1"/>
</dbReference>
<dbReference type="PANTHER" id="PTHR13479:SF40">
    <property type="entry name" value="SMALL RIBOSOMAL SUBUNIT PROTEIN BS18M"/>
    <property type="match status" value="1"/>
</dbReference>
<dbReference type="Pfam" id="PF01084">
    <property type="entry name" value="Ribosomal_S18"/>
    <property type="match status" value="1"/>
</dbReference>
<dbReference type="PRINTS" id="PR00974">
    <property type="entry name" value="RIBOSOMALS18"/>
</dbReference>
<dbReference type="SUPFAM" id="SSF46911">
    <property type="entry name" value="Ribosomal protein S18"/>
    <property type="match status" value="1"/>
</dbReference>
<dbReference type="PROSITE" id="PS00057">
    <property type="entry name" value="RIBOSOMAL_S18"/>
    <property type="match status" value="1"/>
</dbReference>
<protein>
    <recommendedName>
        <fullName evidence="1">Small ribosomal subunit protein bS18</fullName>
    </recommendedName>
    <alternativeName>
        <fullName evidence="2">30S ribosomal protein S18</fullName>
    </alternativeName>
</protein>
<proteinExistence type="inferred from homology"/>
<name>RS18_YERP3</name>
<sequence>MARYFRRRKFCRFTAEGVVEIDYKDIATLKNYITESGKIVPSRITGTRAKYQRQLARCIKRARYLSLLPYTDRHQ</sequence>
<organism>
    <name type="scientific">Yersinia pseudotuberculosis serotype O:1b (strain IP 31758)</name>
    <dbReference type="NCBI Taxonomy" id="349747"/>
    <lineage>
        <taxon>Bacteria</taxon>
        <taxon>Pseudomonadati</taxon>
        <taxon>Pseudomonadota</taxon>
        <taxon>Gammaproteobacteria</taxon>
        <taxon>Enterobacterales</taxon>
        <taxon>Yersiniaceae</taxon>
        <taxon>Yersinia</taxon>
    </lineage>
</organism>
<keyword id="KW-0687">Ribonucleoprotein</keyword>
<keyword id="KW-0689">Ribosomal protein</keyword>
<keyword id="KW-0694">RNA-binding</keyword>
<keyword id="KW-0699">rRNA-binding</keyword>
<reference key="1">
    <citation type="journal article" date="2007" name="PLoS Genet.">
        <title>The complete genome sequence of Yersinia pseudotuberculosis IP31758, the causative agent of Far East scarlet-like fever.</title>
        <authorList>
            <person name="Eppinger M."/>
            <person name="Rosovitz M.J."/>
            <person name="Fricke W.F."/>
            <person name="Rasko D.A."/>
            <person name="Kokorina G."/>
            <person name="Fayolle C."/>
            <person name="Lindler L.E."/>
            <person name="Carniel E."/>
            <person name="Ravel J."/>
        </authorList>
    </citation>
    <scope>NUCLEOTIDE SEQUENCE [LARGE SCALE GENOMIC DNA]</scope>
    <source>
        <strain>IP 31758</strain>
    </source>
</reference>
<feature type="chain" id="PRO_1000059144" description="Small ribosomal subunit protein bS18">
    <location>
        <begin position="1"/>
        <end position="75"/>
    </location>
</feature>
<gene>
    <name evidence="1" type="primary">rpsR</name>
    <name type="ordered locus">YpsIP31758_3637</name>
</gene>